<keyword id="KW-0175">Coiled coil</keyword>
<keyword id="KW-1031">Host cell junction</keyword>
<keyword id="KW-1185">Reference proteome</keyword>
<keyword id="KW-0813">Transport</keyword>
<keyword id="KW-0916">Viral movement protein</keyword>
<name>MVP_SOCMV</name>
<reference key="1">
    <citation type="journal article" date="1989" name="Nucleic Acids Res.">
        <title>The complete sequence of soybean chlorotic mottle virus DNA and the identification of a novel promoter.</title>
        <authorList>
            <person name="Hasegawa A."/>
            <person name="Verver J."/>
            <person name="Shimada A."/>
            <person name="Saito M."/>
            <person name="Goldbach R."/>
            <person name="van Kammen A."/>
            <person name="Miki K."/>
            <person name="Kameya-Iwaki M."/>
            <person name="Hibi T."/>
        </authorList>
    </citation>
    <scope>NUCLEOTIDE SEQUENCE [GENOMIC DNA]</scope>
</reference>
<proteinExistence type="inferred from homology"/>
<dbReference type="EMBL" id="X15828">
    <property type="protein sequence ID" value="CAA33833.1"/>
    <property type="molecule type" value="Genomic_DNA"/>
</dbReference>
<dbReference type="PIR" id="JS0379">
    <property type="entry name" value="JS0379"/>
</dbReference>
<dbReference type="KEGG" id="vg:912260"/>
<dbReference type="OrthoDB" id="20304at10239"/>
<dbReference type="Proteomes" id="UP000001065">
    <property type="component" value="Genome"/>
</dbReference>
<dbReference type="GO" id="GO:0044219">
    <property type="term" value="C:host cell plasmodesma"/>
    <property type="evidence" value="ECO:0007669"/>
    <property type="project" value="UniProtKB-SubCell"/>
</dbReference>
<dbReference type="GO" id="GO:0046740">
    <property type="term" value="P:transport of virus in host, cell to cell"/>
    <property type="evidence" value="ECO:0007669"/>
    <property type="project" value="UniProtKB-KW"/>
</dbReference>
<dbReference type="InterPro" id="IPR051596">
    <property type="entry name" value="Caulimoviridae_Movement"/>
</dbReference>
<dbReference type="InterPro" id="IPR028919">
    <property type="entry name" value="Viral_movement"/>
</dbReference>
<dbReference type="PANTHER" id="PTHR47599">
    <property type="entry name" value="CELL-TO-CELL MOVEMENT PROTEIN"/>
    <property type="match status" value="1"/>
</dbReference>
<dbReference type="PANTHER" id="PTHR47599:SF3">
    <property type="entry name" value="CELL-TO-CELL MOVEMENT PROTEIN"/>
    <property type="match status" value="1"/>
</dbReference>
<dbReference type="Pfam" id="PF01107">
    <property type="entry name" value="MP"/>
    <property type="match status" value="1"/>
</dbReference>
<gene>
    <name type="ORF">ORF I</name>
</gene>
<organism>
    <name type="scientific">Soybean chlorotic mottle virus</name>
    <dbReference type="NCBI Taxonomy" id="10651"/>
    <lineage>
        <taxon>Viruses</taxon>
        <taxon>Riboviria</taxon>
        <taxon>Pararnavirae</taxon>
        <taxon>Artverviricota</taxon>
        <taxon>Revtraviricetes</taxon>
        <taxon>Ortervirales</taxon>
        <taxon>Caulimoviridae</taxon>
        <taxon>Soymovirus</taxon>
        <taxon>Soymovirus maculaglycinis</taxon>
    </lineage>
</organism>
<sequence>MEIVELKDDNQEYFLDALLGKEIEKTDFSITEKENFKQNKFKELRNVFSRDNILKFGLMTGEVQIPIEQTDGSVFLATINKEQITKRISKIEEKQRRLIRYVHISTLQVLIKSTFLKGLDTPLELTLRDNRLLNLEESKIAVGHGNLKYGKMKFDVNLQLGLSLKDLDLDRSIILNYKFLRRNFMKEGNHAFSISYRINYALSNSHHSVEFKQKEKIYIDELFSEVLELKHPVFSKLTKSQSLRIEPSPVFEKPLISFKENQKTEEKTVFKPPKRDFELTETSKLKSMISDLTQKVVNLDKKI</sequence>
<comment type="function">
    <text evidence="1">Transports viral genome to neighboring plant cells directly through plasmosdesmata, without any budding. The movement protein allows efficient cell to cell propagation, by bypassing the host cell wall barrier. Acts by forming tubules structures that increase the size exclusion limit (SEL) of plasmodesmata, thereby allowing viral ribonucleocapsids to spread directly to neighboring cells (By similarity).</text>
</comment>
<comment type="subunit">
    <text>Homotrimer, through the coiled-coil domain. Interacts with VAP.</text>
</comment>
<comment type="subcellular location">
    <subcellularLocation>
        <location evidence="1">Host cell junction</location>
        <location evidence="1">Host plasmodesma</location>
    </subcellularLocation>
    <text>Assembles in tubules that are embedded within modified plasmodesmata.</text>
</comment>
<comment type="similarity">
    <text evidence="2">Belongs to the caulimoviridae movement protein family.</text>
</comment>
<organismHost>
    <name type="scientific">Glycine max</name>
    <name type="common">Soybean</name>
    <name type="synonym">Glycine hispida</name>
    <dbReference type="NCBI Taxonomy" id="3847"/>
</organismHost>
<organismHost>
    <name type="scientific">Lablab purpureus</name>
    <name type="common">Hyacinth bean</name>
    <name type="synonym">Dolichos lablab</name>
    <dbReference type="NCBI Taxonomy" id="35936"/>
</organismHost>
<organismHost>
    <name type="scientific">Phaseolus vulgaris</name>
    <name type="common">Kidney bean</name>
    <name type="synonym">French bean</name>
    <dbReference type="NCBI Taxonomy" id="3885"/>
</organismHost>
<organismHost>
    <name type="scientific">Vigna unguiculata</name>
    <name type="common">Cowpea</name>
    <dbReference type="NCBI Taxonomy" id="3917"/>
</organismHost>
<protein>
    <recommendedName>
        <fullName>Movement protein</fullName>
        <shortName>Mov</shortName>
    </recommendedName>
    <alternativeName>
        <fullName>Cell-to-cell transport protein</fullName>
    </alternativeName>
    <alternativeName>
        <fullName>ORF IA</fullName>
    </alternativeName>
</protein>
<evidence type="ECO:0000250" key="1"/>
<evidence type="ECO:0000305" key="2"/>
<accession>P15631</accession>
<feature type="chain" id="PRO_0000222066" description="Movement protein">
    <location>
        <begin position="1"/>
        <end position="303"/>
    </location>
</feature>
<feature type="coiled-coil region" evidence="1">
    <location>
        <begin position="272"/>
        <end position="302"/>
    </location>
</feature>